<reference key="1">
    <citation type="journal article" date="2002" name="Proc. Natl. Acad. Sci. U.S.A.">
        <title>Extensive mosaic structure revealed by the complete genome sequence of uropathogenic Escherichia coli.</title>
        <authorList>
            <person name="Welch R.A."/>
            <person name="Burland V."/>
            <person name="Plunkett G. III"/>
            <person name="Redford P."/>
            <person name="Roesch P."/>
            <person name="Rasko D."/>
            <person name="Buckles E.L."/>
            <person name="Liou S.-R."/>
            <person name="Boutin A."/>
            <person name="Hackett J."/>
            <person name="Stroud D."/>
            <person name="Mayhew G.F."/>
            <person name="Rose D.J."/>
            <person name="Zhou S."/>
            <person name="Schwartz D.C."/>
            <person name="Perna N.T."/>
            <person name="Mobley H.L.T."/>
            <person name="Donnenberg M.S."/>
            <person name="Blattner F.R."/>
        </authorList>
    </citation>
    <scope>NUCLEOTIDE SEQUENCE [LARGE SCALE GENOMIC DNA]</scope>
    <source>
        <strain>CFT073 / ATCC 700928 / UPEC</strain>
    </source>
</reference>
<proteinExistence type="inferred from homology"/>
<dbReference type="EC" id="2.4.99.28" evidence="1"/>
<dbReference type="EMBL" id="AE014075">
    <property type="protein sequence ID" value="AAN82408.1"/>
    <property type="molecule type" value="Genomic_DNA"/>
</dbReference>
<dbReference type="RefSeq" id="WP_000047069.1">
    <property type="nucleotide sequence ID" value="NZ_CP051263.1"/>
</dbReference>
<dbReference type="SMR" id="Q8FD68"/>
<dbReference type="STRING" id="199310.c3968"/>
<dbReference type="CAZy" id="GT51">
    <property type="family name" value="Glycosyltransferase Family 51"/>
</dbReference>
<dbReference type="KEGG" id="ecc:c3968"/>
<dbReference type="eggNOG" id="COG0744">
    <property type="taxonomic scope" value="Bacteria"/>
</dbReference>
<dbReference type="HOGENOM" id="CLU_006354_1_1_6"/>
<dbReference type="BioCyc" id="ECOL199310:C3968-MONOMER"/>
<dbReference type="UniPathway" id="UPA00219"/>
<dbReference type="Proteomes" id="UP000001410">
    <property type="component" value="Chromosome"/>
</dbReference>
<dbReference type="GO" id="GO:0009274">
    <property type="term" value="C:peptidoglycan-based cell wall"/>
    <property type="evidence" value="ECO:0007669"/>
    <property type="project" value="InterPro"/>
</dbReference>
<dbReference type="GO" id="GO:0005886">
    <property type="term" value="C:plasma membrane"/>
    <property type="evidence" value="ECO:0007669"/>
    <property type="project" value="UniProtKB-SubCell"/>
</dbReference>
<dbReference type="GO" id="GO:0016763">
    <property type="term" value="F:pentosyltransferase activity"/>
    <property type="evidence" value="ECO:0007669"/>
    <property type="project" value="InterPro"/>
</dbReference>
<dbReference type="GO" id="GO:0008955">
    <property type="term" value="F:peptidoglycan glycosyltransferase activity"/>
    <property type="evidence" value="ECO:0007669"/>
    <property type="project" value="UniProtKB-UniRule"/>
</dbReference>
<dbReference type="GO" id="GO:0071555">
    <property type="term" value="P:cell wall organization"/>
    <property type="evidence" value="ECO:0007669"/>
    <property type="project" value="UniProtKB-KW"/>
</dbReference>
<dbReference type="GO" id="GO:0009252">
    <property type="term" value="P:peptidoglycan biosynthetic process"/>
    <property type="evidence" value="ECO:0007669"/>
    <property type="project" value="UniProtKB-UniRule"/>
</dbReference>
<dbReference type="GO" id="GO:0008360">
    <property type="term" value="P:regulation of cell shape"/>
    <property type="evidence" value="ECO:0007669"/>
    <property type="project" value="UniProtKB-KW"/>
</dbReference>
<dbReference type="FunFam" id="1.10.3810.10:FF:000004">
    <property type="entry name" value="Biosynthetic peptidoglycan transglycosylase"/>
    <property type="match status" value="1"/>
</dbReference>
<dbReference type="Gene3D" id="1.10.3810.10">
    <property type="entry name" value="Biosynthetic peptidoglycan transglycosylase-like"/>
    <property type="match status" value="1"/>
</dbReference>
<dbReference type="HAMAP" id="MF_00766">
    <property type="entry name" value="PGT_MtgA"/>
    <property type="match status" value="1"/>
</dbReference>
<dbReference type="InterPro" id="IPR001264">
    <property type="entry name" value="Glyco_trans_51"/>
</dbReference>
<dbReference type="InterPro" id="IPR023346">
    <property type="entry name" value="Lysozyme-like_dom_sf"/>
</dbReference>
<dbReference type="InterPro" id="IPR036950">
    <property type="entry name" value="PBP_transglycosylase"/>
</dbReference>
<dbReference type="InterPro" id="IPR011812">
    <property type="entry name" value="Pep_trsgly"/>
</dbReference>
<dbReference type="NCBIfam" id="TIGR02070">
    <property type="entry name" value="mono_pep_trsgly"/>
    <property type="match status" value="1"/>
</dbReference>
<dbReference type="PANTHER" id="PTHR30400:SF0">
    <property type="entry name" value="BIOSYNTHETIC PEPTIDOGLYCAN TRANSGLYCOSYLASE"/>
    <property type="match status" value="1"/>
</dbReference>
<dbReference type="PANTHER" id="PTHR30400">
    <property type="entry name" value="MONOFUNCTIONAL BIOSYNTHETIC PEPTIDOGLYCAN TRANSGLYCOSYLASE"/>
    <property type="match status" value="1"/>
</dbReference>
<dbReference type="Pfam" id="PF00912">
    <property type="entry name" value="Transgly"/>
    <property type="match status" value="1"/>
</dbReference>
<dbReference type="SUPFAM" id="SSF53955">
    <property type="entry name" value="Lysozyme-like"/>
    <property type="match status" value="1"/>
</dbReference>
<protein>
    <recommendedName>
        <fullName evidence="1">Biosynthetic peptidoglycan transglycosylase</fullName>
        <ecNumber evidence="1">2.4.99.28</ecNumber>
    </recommendedName>
    <alternativeName>
        <fullName evidence="1">Glycan polymerase</fullName>
    </alternativeName>
    <alternativeName>
        <fullName evidence="1">Peptidoglycan glycosyltransferase MtgA</fullName>
        <shortName evidence="1">PGT</shortName>
    </alternativeName>
</protein>
<sequence>MSKSRLTVFSFVRRFLLRLMVVLAIFWGGGIALFSVAPVPFSAVMVERQVSAWLHGNFRYVAHSDWVSMDQISPWMGLAVIAAEDQKFPEHWGFDVASIEQALAHNERNENRIRGASTISQQTAKNLFLWDGRSWVRKGLEAGLTLGIETVWSKKRILTVYLNIAEFGDGVFGVEAAAQRYFHKPASKLTRSEAALLAAVLPNPLRFKVSAPSGYVRSRQAWILRQMYQLGGEPFMQQHQLD</sequence>
<comment type="function">
    <text evidence="1">Peptidoglycan polymerase that catalyzes glycan chain elongation from lipid-linked precursors.</text>
</comment>
<comment type="catalytic activity">
    <reaction evidence="1">
        <text>[GlcNAc-(1-&gt;4)-Mur2Ac(oyl-L-Ala-gamma-D-Glu-L-Lys-D-Ala-D-Ala)](n)-di-trans,octa-cis-undecaprenyl diphosphate + beta-D-GlcNAc-(1-&gt;4)-Mur2Ac(oyl-L-Ala-gamma-D-Glu-L-Lys-D-Ala-D-Ala)-di-trans,octa-cis-undecaprenyl diphosphate = [GlcNAc-(1-&gt;4)-Mur2Ac(oyl-L-Ala-gamma-D-Glu-L-Lys-D-Ala-D-Ala)](n+1)-di-trans,octa-cis-undecaprenyl diphosphate + di-trans,octa-cis-undecaprenyl diphosphate + H(+)</text>
        <dbReference type="Rhea" id="RHEA:23708"/>
        <dbReference type="Rhea" id="RHEA-COMP:9602"/>
        <dbReference type="Rhea" id="RHEA-COMP:9603"/>
        <dbReference type="ChEBI" id="CHEBI:15378"/>
        <dbReference type="ChEBI" id="CHEBI:58405"/>
        <dbReference type="ChEBI" id="CHEBI:60033"/>
        <dbReference type="ChEBI" id="CHEBI:78435"/>
        <dbReference type="EC" id="2.4.99.28"/>
    </reaction>
</comment>
<comment type="pathway">
    <text evidence="1">Cell wall biogenesis; peptidoglycan biosynthesis.</text>
</comment>
<comment type="subcellular location">
    <subcellularLocation>
        <location evidence="1">Cell inner membrane</location>
        <topology evidence="1">Single-pass membrane protein</topology>
    </subcellularLocation>
</comment>
<comment type="similarity">
    <text evidence="1">Belongs to the glycosyltransferase 51 family.</text>
</comment>
<accession>Q8FD68</accession>
<evidence type="ECO:0000255" key="1">
    <source>
        <dbReference type="HAMAP-Rule" id="MF_00766"/>
    </source>
</evidence>
<feature type="chain" id="PRO_0000083126" description="Biosynthetic peptidoglycan transglycosylase">
    <location>
        <begin position="1"/>
        <end position="242"/>
    </location>
</feature>
<feature type="transmembrane region" description="Helical" evidence="1">
    <location>
        <begin position="19"/>
        <end position="39"/>
    </location>
</feature>
<gene>
    <name evidence="1" type="primary">mtgA</name>
    <name type="ordered locus">c3968</name>
</gene>
<organism>
    <name type="scientific">Escherichia coli O6:H1 (strain CFT073 / ATCC 700928 / UPEC)</name>
    <dbReference type="NCBI Taxonomy" id="199310"/>
    <lineage>
        <taxon>Bacteria</taxon>
        <taxon>Pseudomonadati</taxon>
        <taxon>Pseudomonadota</taxon>
        <taxon>Gammaproteobacteria</taxon>
        <taxon>Enterobacterales</taxon>
        <taxon>Enterobacteriaceae</taxon>
        <taxon>Escherichia</taxon>
    </lineage>
</organism>
<keyword id="KW-0997">Cell inner membrane</keyword>
<keyword id="KW-1003">Cell membrane</keyword>
<keyword id="KW-0133">Cell shape</keyword>
<keyword id="KW-0961">Cell wall biogenesis/degradation</keyword>
<keyword id="KW-0328">Glycosyltransferase</keyword>
<keyword id="KW-0472">Membrane</keyword>
<keyword id="KW-0573">Peptidoglycan synthesis</keyword>
<keyword id="KW-1185">Reference proteome</keyword>
<keyword id="KW-0808">Transferase</keyword>
<keyword id="KW-0812">Transmembrane</keyword>
<keyword id="KW-1133">Transmembrane helix</keyword>
<name>MTGA_ECOL6</name>